<feature type="signal peptide" evidence="1">
    <location>
        <begin position="1"/>
        <end position="30"/>
    </location>
</feature>
<feature type="chain" id="PRO_0000032631" description="Surface-layer 125 kDa protein">
    <location>
        <begin position="31"/>
        <end position="1176"/>
    </location>
</feature>
<feature type="domain" description="SLH 1" evidence="2">
    <location>
        <begin position="31"/>
        <end position="88"/>
    </location>
</feature>
<feature type="domain" description="SLH 2" evidence="2">
    <location>
        <begin position="89"/>
        <end position="152"/>
    </location>
</feature>
<feature type="domain" description="SLH 3" evidence="2">
    <location>
        <begin position="153"/>
        <end position="216"/>
    </location>
</feature>
<evidence type="ECO:0000255" key="1"/>
<evidence type="ECO:0000255" key="2">
    <source>
        <dbReference type="PROSITE-ProRule" id="PRU00777"/>
    </source>
</evidence>
<sequence length="1176" mass="125226">MAKQNKGRKFFAASATAALVASAIVPVASAAQLNDFNKISGYAKEAVQSLVDAGVIQGDANGNFNPLKTISRAEAATIFTNALELEAEGDVNFKDVKADAWYYDAIAATVENGIFEGVSATEFAPNKQLTRSEAAKILVDAFELEGEGDLSEFADASTVKPWAKSYLEIAVANGVIKGSEANGKTNLNPNAPITRQDFAVVFSRTIENVDATPKVDKIEVVDAKTLNVTLSDGTKETVTLEKALEPNKETEVTFKIKDVEYKAKVTYVVTTATAVKSVSATNLKEVVVEFDGTVDKETAEDAANYALKSGKTIKSVSLAADNKTATVTLTDKLNNNKADAISISNVKAGDKEINVKNVEFTAVDNKIPEVTEVKSLGTKAVKVTLSEPVENLSSTNFTLDGKAYFGNVVMGAGNKTVILTPYSSSALSVGDHKLTVSGAKDFAGFVSLNSTHEFKVVEDKEAPTVTEATATLETVTLTFSEDIDMDTVKASNVYWKSGDSKKEASEFERIADNKYKFVFKGSEKTLPTGKVDVYVEDIKDYSDNKIAKDTKVTVTPEIDQTRPEVRKVTALDEKTIKVTFSKTVDGESAIKTGNYTVKDKDDKVVSVDKVTVDSKDSKSVIIDLYSKVSVGENTITIKNVKDATKLNNTMLDYTGKFTRSDKEGPDYEHVINADAKAKKVVLKFDKKMDAASLADYSNYLVKINDTLQTLSEDVATLSVSNDATVVTITFAETIKGDDVVFASGKAISGSGKVNVNELQVMGVKDTSGNVHKKFNGSENKITLSSTSTPLKLAKIDKDYDAKYTAELVDRKTVKVKFSTVINSAAANAFTSESHKIDSIQVNGTSTVTVKFKDEINTNASDLDLKVNLSKLVDIAGNESTNNTPIAIKAGINLLDSVAPVVVGEPVVDKETITFTFSENLTSVSIGEVLSTDFTVTRVSDNKDLAIKDYSVAIANNNQVVITLSDNREVATAYKVTAKNAKLITDDNGDKKNAIADFTKTTATKVEASGTLSLDAAKTNLNNEITKAKDAKATGTEGTAATNQIVGSKDALQVAIDVAELVKNDTAATLQQLTDAKTDLTAAITAYNAAKVEDISSLLVAPDLVLGTTDNGTITGFVAGTGETLKVTSDSAANVEVTDPTGLAVTAKAKGEANILVQVLKGDKVIKTGTVKVTVSE</sequence>
<accession>P38537</accession>
<comment type="function">
    <text>The S-layer is a paracrystalline mono-layered assembly of proteins which coat the surface of bacteria.</text>
</comment>
<comment type="subcellular location">
    <subcellularLocation>
        <location>Secreted</location>
        <location>Cell wall</location>
        <location>S-layer</location>
    </subcellularLocation>
</comment>
<reference key="1">
    <citation type="journal article" date="1989" name="J. Bacteriol.">
        <title>Cloning and sequencing of the gene encoding a 125-kilodalton surface-layer protein from Bacillus sphaericus 2362 and of a related cryptic gene.</title>
        <authorList>
            <person name="Bowditch R.D."/>
            <person name="Baumann P."/>
            <person name="Yousten A.A."/>
        </authorList>
    </citation>
    <scope>NUCLEOTIDE SEQUENCE [GENOMIC DNA]</scope>
    <source>
        <strain>2362</strain>
    </source>
</reference>
<protein>
    <recommendedName>
        <fullName>Surface-layer 125 kDa protein</fullName>
    </recommendedName>
</protein>
<dbReference type="EMBL" id="M28361">
    <property type="protein sequence ID" value="AAA50256.1"/>
    <property type="molecule type" value="Genomic_DNA"/>
</dbReference>
<dbReference type="PIR" id="A33856">
    <property type="entry name" value="A33856"/>
</dbReference>
<dbReference type="RefSeq" id="WP_012292791.1">
    <property type="nucleotide sequence ID" value="NZ_LWHI01000001.1"/>
</dbReference>
<dbReference type="SMR" id="P38537"/>
<dbReference type="STRING" id="1421.A2J09_21570"/>
<dbReference type="GO" id="GO:0005576">
    <property type="term" value="C:extracellular region"/>
    <property type="evidence" value="ECO:0007669"/>
    <property type="project" value="UniProtKB-KW"/>
</dbReference>
<dbReference type="GO" id="GO:0030115">
    <property type="term" value="C:S-layer"/>
    <property type="evidence" value="ECO:0007669"/>
    <property type="project" value="UniProtKB-SubCell"/>
</dbReference>
<dbReference type="Gene3D" id="2.60.40.1220">
    <property type="match status" value="5"/>
</dbReference>
<dbReference type="Gene3D" id="1.20.1270.90">
    <property type="entry name" value="AF1782-like"/>
    <property type="match status" value="1"/>
</dbReference>
<dbReference type="InterPro" id="IPR051465">
    <property type="entry name" value="Cell_Envelope_Struct_Comp"/>
</dbReference>
<dbReference type="InterPro" id="IPR014755">
    <property type="entry name" value="Cu-Rt/internalin_Ig-like"/>
</dbReference>
<dbReference type="InterPro" id="IPR001119">
    <property type="entry name" value="SLH_dom"/>
</dbReference>
<dbReference type="PANTHER" id="PTHR43308">
    <property type="entry name" value="OUTER MEMBRANE PROTEIN ALPHA-RELATED"/>
    <property type="match status" value="1"/>
</dbReference>
<dbReference type="Pfam" id="PF00395">
    <property type="entry name" value="SLH"/>
    <property type="match status" value="3"/>
</dbReference>
<dbReference type="PROSITE" id="PS51272">
    <property type="entry name" value="SLH"/>
    <property type="match status" value="3"/>
</dbReference>
<name>SLAP_LYSSH</name>
<proteinExistence type="inferred from homology"/>
<organism>
    <name type="scientific">Lysinibacillus sphaericus</name>
    <name type="common">Bacillus sphaericus</name>
    <dbReference type="NCBI Taxonomy" id="1421"/>
    <lineage>
        <taxon>Bacteria</taxon>
        <taxon>Bacillati</taxon>
        <taxon>Bacillota</taxon>
        <taxon>Bacilli</taxon>
        <taxon>Bacillales</taxon>
        <taxon>Bacillaceae</taxon>
        <taxon>Lysinibacillus</taxon>
    </lineage>
</organism>
<keyword id="KW-0134">Cell wall</keyword>
<keyword id="KW-0677">Repeat</keyword>
<keyword id="KW-0701">S-layer</keyword>
<keyword id="KW-0964">Secreted</keyword>
<keyword id="KW-0732">Signal</keyword>